<comment type="function">
    <text evidence="4 5">Auxiliary component of the CatSper complex, a complex involved in sperm cell hyperactivation (PubMed:28226241, PubMed:34225353). Sperm cell hyperactivation is needed for sperm motility which is essential late in the preparation of sperm for fertilization (PubMed:28226241).</text>
</comment>
<comment type="subunit">
    <text evidence="2 4 5 6">Component of the CatSper complex or CatSpermasome composed of the core pore-forming members CATSPER1, CATSPER2, CATSPER3 and CATSPER4 as well as auxiliary members CATSPERB, CATSPERG2, CATSPERD, CATSPERE, CATSPERZ, C2CD6/CATSPERT, SLCO6C1, TMEM249, TMEM262 and EFCAB9 (PubMed:28226241, PubMed:34225353, PubMed:34998468). HSPA1 may be an additional auxiliary complex member (By similarity). The core complex members CATSPER1, CATSPER2, CATSPER3 and CATSPER4 form a heterotetrameric channel (PubMed:34225353). The auxiliary CATSPERB, CATSPERG2, CATSPERD and CATSPERE subunits form a pavilion-like structure over the pore which stabilizes the complex through interactions with CATSPER4, CATSPER3, CATSPER1 and CATSPER2 respectively (PubMed:34225353). SLCO6C1 interacts with CATSPERE and TMEM262/CATSPERH interacts with CATSPERB, further stabilizing the complex (PubMed:34225353). C2CD6/CATSPERT interacts at least with CATSPERD and is required for targeting the CatSper complex in the flagellar membrane (PubMed:34998468).</text>
</comment>
<comment type="subcellular location">
    <subcellularLocation>
        <location evidence="4">Cell projection</location>
        <location evidence="4">Cilium</location>
        <location evidence="4">Flagellum membrane</location>
        <topology evidence="3">Single-pass type I membrane protein</topology>
    </subcellularLocation>
    <text evidence="4">Specifically located in the principal piece of sperm tail.</text>
</comment>
<comment type="tissue specificity">
    <text evidence="4">Testis-specific.</text>
</comment>
<comment type="similarity">
    <text evidence="8">Belongs to the CATSPERD family.</text>
</comment>
<evidence type="ECO:0000250" key="1">
    <source>
        <dbReference type="UniProtKB" id="Q5SY80"/>
    </source>
</evidence>
<evidence type="ECO:0000250" key="2">
    <source>
        <dbReference type="UniProtKB" id="Q91ZR5"/>
    </source>
</evidence>
<evidence type="ECO:0000255" key="3"/>
<evidence type="ECO:0000269" key="4">
    <source>
    </source>
</evidence>
<evidence type="ECO:0000269" key="5">
    <source>
    </source>
</evidence>
<evidence type="ECO:0000269" key="6">
    <source>
    </source>
</evidence>
<evidence type="ECO:0000303" key="7">
    <source>
    </source>
</evidence>
<evidence type="ECO:0000305" key="8"/>
<evidence type="ECO:0000312" key="9">
    <source>
        <dbReference type="MGI" id="MGI:3647531"/>
    </source>
</evidence>
<evidence type="ECO:0007744" key="10">
    <source>
        <dbReference type="PDB" id="7EEB"/>
    </source>
</evidence>
<evidence type="ECO:0007829" key="11">
    <source>
        <dbReference type="PDB" id="7EEB"/>
    </source>
</evidence>
<dbReference type="EMBL" id="AC157787">
    <property type="status" value="NOT_ANNOTATED_CDS"/>
    <property type="molecule type" value="Genomic_DNA"/>
</dbReference>
<dbReference type="EMBL" id="AC163217">
    <property type="status" value="NOT_ANNOTATED_CDS"/>
    <property type="molecule type" value="Genomic_DNA"/>
</dbReference>
<dbReference type="RefSeq" id="XP_006497146.1">
    <property type="nucleotide sequence ID" value="XM_006497083.2"/>
</dbReference>
<dbReference type="PDB" id="7EEB">
    <property type="method" value="EM"/>
    <property type="resolution" value="2.90 A"/>
    <property type="chains" value="H=1-985"/>
</dbReference>
<dbReference type="PDBsum" id="7EEB"/>
<dbReference type="EMDB" id="EMD-31076"/>
<dbReference type="SMR" id="P0DP43"/>
<dbReference type="ComplexPortal" id="CPX-9078">
    <property type="entry name" value="CatSpermasome complex, gamma subunit variant 2"/>
</dbReference>
<dbReference type="CORUM" id="P0DP43"/>
<dbReference type="FunCoup" id="P0DP43">
    <property type="interactions" value="14"/>
</dbReference>
<dbReference type="STRING" id="10090.ENSMUSP00000159061"/>
<dbReference type="GlyCosmos" id="P0DP43">
    <property type="glycosylation" value="11 sites, No reported glycans"/>
</dbReference>
<dbReference type="GlyGen" id="P0DP43">
    <property type="glycosylation" value="11 sites"/>
</dbReference>
<dbReference type="iPTMnet" id="P0DP43"/>
<dbReference type="PhosphoSitePlus" id="P0DP43"/>
<dbReference type="SwissPalm" id="P0DP43"/>
<dbReference type="ProteomicsDB" id="285352"/>
<dbReference type="AGR" id="MGI:3647531"/>
<dbReference type="MGI" id="MGI:3647531">
    <property type="gene designation" value="Catspere1"/>
</dbReference>
<dbReference type="InParanoid" id="P0DP43"/>
<dbReference type="ChiTaRS" id="Gm7068">
    <property type="organism name" value="mouse"/>
</dbReference>
<dbReference type="PRO" id="PR:P0DP43"/>
<dbReference type="Proteomes" id="UP000000589">
    <property type="component" value="Unplaced"/>
</dbReference>
<dbReference type="RNAct" id="P0DP43">
    <property type="molecule type" value="protein"/>
</dbReference>
<dbReference type="GO" id="GO:0036128">
    <property type="term" value="C:CatSper complex"/>
    <property type="evidence" value="ECO:0000314"/>
    <property type="project" value="UniProtKB"/>
</dbReference>
<dbReference type="GO" id="GO:0097228">
    <property type="term" value="C:sperm principal piece"/>
    <property type="evidence" value="ECO:0000314"/>
    <property type="project" value="UniProtKB"/>
</dbReference>
<dbReference type="InterPro" id="IPR028751">
    <property type="entry name" value="CATSPERD/E"/>
</dbReference>
<dbReference type="InterPro" id="IPR053814">
    <property type="entry name" value="CATSPERD/E_C"/>
</dbReference>
<dbReference type="InterPro" id="IPR053816">
    <property type="entry name" value="CATSPERE_b-prop"/>
</dbReference>
<dbReference type="InterPro" id="IPR053815">
    <property type="entry name" value="CATSPERE_Ig-like"/>
</dbReference>
<dbReference type="InterPro" id="IPR053818">
    <property type="entry name" value="CATSPERE_NTD1"/>
</dbReference>
<dbReference type="InterPro" id="IPR053817">
    <property type="entry name" value="CATSPERE_NTD2"/>
</dbReference>
<dbReference type="PANTHER" id="PTHR33722:SF3">
    <property type="entry name" value="CATION CHANNEL SPERM-ASSOCIATED AUXILIARY SUBUNIT EPSILON"/>
    <property type="match status" value="1"/>
</dbReference>
<dbReference type="PANTHER" id="PTHR33722">
    <property type="entry name" value="CATION CHANNEL SPERM-ASSOCIATED PROTEIN SUBUNIT DELTA-RELATED"/>
    <property type="match status" value="1"/>
</dbReference>
<dbReference type="Pfam" id="PF22844">
    <property type="entry name" value="Beta-prop_CATSPERE"/>
    <property type="match status" value="1"/>
</dbReference>
<dbReference type="Pfam" id="PF22850">
    <property type="entry name" value="CATSPERD-E_C"/>
    <property type="match status" value="1"/>
</dbReference>
<dbReference type="Pfam" id="PF22849">
    <property type="entry name" value="CATSPERE_Ig-like"/>
    <property type="match status" value="1"/>
</dbReference>
<dbReference type="Pfam" id="PF22841">
    <property type="entry name" value="CATSPERE_NTD1"/>
    <property type="match status" value="1"/>
</dbReference>
<dbReference type="Pfam" id="PF22843">
    <property type="entry name" value="CATSPERE_NTD2"/>
    <property type="match status" value="1"/>
</dbReference>
<reference key="1">
    <citation type="journal article" date="2009" name="PLoS Biol.">
        <title>Lineage-specific biology revealed by a finished genome assembly of the mouse.</title>
        <authorList>
            <person name="Church D.M."/>
            <person name="Goodstadt L."/>
            <person name="Hillier L.W."/>
            <person name="Zody M.C."/>
            <person name="Goldstein S."/>
            <person name="She X."/>
            <person name="Bult C.J."/>
            <person name="Agarwala R."/>
            <person name="Cherry J.L."/>
            <person name="DiCuccio M."/>
            <person name="Hlavina W."/>
            <person name="Kapustin Y."/>
            <person name="Meric P."/>
            <person name="Maglott D."/>
            <person name="Birtle Z."/>
            <person name="Marques A.C."/>
            <person name="Graves T."/>
            <person name="Zhou S."/>
            <person name="Teague B."/>
            <person name="Potamousis K."/>
            <person name="Churas C."/>
            <person name="Place M."/>
            <person name="Herschleb J."/>
            <person name="Runnheim R."/>
            <person name="Forrest D."/>
            <person name="Amos-Landgraf J."/>
            <person name="Schwartz D.C."/>
            <person name="Cheng Z."/>
            <person name="Lindblad-Toh K."/>
            <person name="Eichler E.E."/>
            <person name="Ponting C.P."/>
        </authorList>
    </citation>
    <scope>NUCLEOTIDE SEQUENCE [LARGE SCALE GENOMIC DNA]</scope>
    <source>
        <strain>C57BL/6J</strain>
    </source>
</reference>
<reference key="2">
    <citation type="journal article" date="2017" name="Elife">
        <title>CatSperzeta regulates the structural continuity of sperm Ca(2+) signaling domains and is required for normal fertility.</title>
        <authorList>
            <person name="Chung J.J."/>
            <person name="Miki K."/>
            <person name="Kim D."/>
            <person name="Shim S.H."/>
            <person name="Shi H.F."/>
            <person name="Hwang J.Y."/>
            <person name="Cai X."/>
            <person name="Iseri Y."/>
            <person name="Zhuang X."/>
            <person name="Clapham D.E."/>
        </authorList>
    </citation>
    <scope>FUNCTION</scope>
    <scope>IDENTIFICATION BY MASS SPECTROMETRY</scope>
    <scope>IDENTIFICATION IN THE CATSPER COMPLEX</scope>
    <scope>SUBCELLULAR LOCATION</scope>
    <scope>TISSUE SPECIFICITY</scope>
</reference>
<reference key="3">
    <citation type="journal article" date="2022" name="Cell Rep.">
        <title>C2cd6-encoded CatSpertau targets sperm calcium channel to Ca2+ signaling domains in the flagellar membrane.</title>
        <authorList>
            <person name="Hwang J.Y."/>
            <person name="Wang H."/>
            <person name="Lu Y."/>
            <person name="Ikawa M."/>
            <person name="Chung J.J."/>
        </authorList>
    </citation>
    <scope>IDENTIFICATION IN THE CATSPER COMPLEX</scope>
</reference>
<reference key="4">
    <citation type="journal article" date="2021" name="Nature">
        <title>Structure of a mammalian sperm cation channel complex.</title>
        <authorList>
            <person name="Lin S."/>
            <person name="Ke M."/>
            <person name="Zhang Y."/>
            <person name="Yan Z."/>
            <person name="Wu J."/>
        </authorList>
    </citation>
    <scope>STRUCTURE BY ELECTRON MICROSCOPY (2.9 ANGSTROMS) OF THE CATSPER COMPLEX</scope>
    <scope>IDENTIFICATION BY MASS SPECTROMETRY</scope>
    <scope>FUNCTION</scope>
    <scope>TRANSMEMBRANE DOMAIN</scope>
    <scope>TOPOLOGY</scope>
    <scope>DISULFIDE BONDS</scope>
    <scope>GLYCOSYLATION AT ASN-91; ASN-143; ASN-292; ASN-502; ASN-565; ASN-749; ASN-830; ASN-888 AND ASN-920</scope>
</reference>
<gene>
    <name evidence="7" type="primary">Catspere</name>
    <name evidence="9" type="synonym">Catspere1</name>
    <name evidence="9" type="synonym">Gm7068</name>
</gene>
<accession>P0DP43</accession>
<organism>
    <name type="scientific">Mus musculus</name>
    <name type="common">Mouse</name>
    <dbReference type="NCBI Taxonomy" id="10090"/>
    <lineage>
        <taxon>Eukaryota</taxon>
        <taxon>Metazoa</taxon>
        <taxon>Chordata</taxon>
        <taxon>Craniata</taxon>
        <taxon>Vertebrata</taxon>
        <taxon>Euteleostomi</taxon>
        <taxon>Mammalia</taxon>
        <taxon>Eutheria</taxon>
        <taxon>Euarchontoglires</taxon>
        <taxon>Glires</taxon>
        <taxon>Rodentia</taxon>
        <taxon>Myomorpha</taxon>
        <taxon>Muroidea</taxon>
        <taxon>Muridae</taxon>
        <taxon>Murinae</taxon>
        <taxon>Mus</taxon>
        <taxon>Mus</taxon>
    </lineage>
</organism>
<feature type="signal peptide" evidence="3">
    <location>
        <begin position="1"/>
        <end position="35"/>
    </location>
</feature>
<feature type="chain" id="PRO_0000440635" description="Cation channel sperm-associated auxiliary subunit epsilon" evidence="3">
    <location>
        <begin position="36"/>
        <end position="985"/>
    </location>
</feature>
<feature type="topological domain" description="Extracellular" evidence="5">
    <location>
        <begin position="36"/>
        <end position="937"/>
    </location>
</feature>
<feature type="transmembrane region" description="Helical" evidence="5">
    <location>
        <begin position="938"/>
        <end position="958"/>
    </location>
</feature>
<feature type="topological domain" description="Cytoplasmic" evidence="5">
    <location>
        <begin position="959"/>
        <end position="985"/>
    </location>
</feature>
<feature type="glycosylation site" description="N-linked (GlcNAc...) asparagine" evidence="5">
    <location>
        <position position="91"/>
    </location>
</feature>
<feature type="glycosylation site" description="N-linked (GlcNAc...) asparagine" evidence="5">
    <location>
        <position position="143"/>
    </location>
</feature>
<feature type="glycosylation site" description="N-linked (GlcNAc...) asparagine" evidence="5">
    <location>
        <position position="292"/>
    </location>
</feature>
<feature type="glycosylation site" description="N-linked (GlcNAc...) asparagine" evidence="5">
    <location>
        <position position="502"/>
    </location>
</feature>
<feature type="glycosylation site" description="N-linked (GlcNAc...) asparagine" evidence="3">
    <location>
        <position position="517"/>
    </location>
</feature>
<feature type="glycosylation site" description="N-linked (GlcNAc...) asparagine" evidence="5">
    <location>
        <position position="565"/>
    </location>
</feature>
<feature type="glycosylation site" description="N-linked (GlcNAc...) asparagine" evidence="5">
    <location>
        <position position="749"/>
    </location>
</feature>
<feature type="glycosylation site" description="N-linked (GlcNAc...) asparagine" evidence="5">
    <location>
        <position position="830"/>
    </location>
</feature>
<feature type="glycosylation site" description="N-linked (GlcNAc...) asparagine" evidence="5">
    <location>
        <position position="888"/>
    </location>
</feature>
<feature type="glycosylation site" description="N-linked (GlcNAc...) asparagine" evidence="3">
    <location>
        <position position="915"/>
    </location>
</feature>
<feature type="glycosylation site" description="N-linked (GlcNAc...) asparagine" evidence="5">
    <location>
        <position position="920"/>
    </location>
</feature>
<feature type="disulfide bond" evidence="5 10">
    <location>
        <begin position="87"/>
        <end position="101"/>
    </location>
</feature>
<feature type="disulfide bond" evidence="5 10">
    <location>
        <begin position="130"/>
        <end position="235"/>
    </location>
</feature>
<feature type="disulfide bond" evidence="5 10">
    <location>
        <begin position="275"/>
        <end position="365"/>
    </location>
</feature>
<feature type="disulfide bond" evidence="5 10">
    <location>
        <begin position="439"/>
        <end position="442"/>
    </location>
</feature>
<feature type="disulfide bond" evidence="5 10">
    <location>
        <begin position="617"/>
        <end position="724"/>
    </location>
</feature>
<feature type="disulfide bond" evidence="5 10">
    <location>
        <begin position="737"/>
        <end position="919"/>
    </location>
</feature>
<feature type="disulfide bond" evidence="5 10">
    <location>
        <begin position="753"/>
        <end position="786"/>
    </location>
</feature>
<feature type="disulfide bond" evidence="5 10">
    <location>
        <begin position="838"/>
        <end position="869"/>
    </location>
</feature>
<feature type="strand" evidence="11">
    <location>
        <begin position="51"/>
        <end position="56"/>
    </location>
</feature>
<feature type="strand" evidence="11">
    <location>
        <begin position="60"/>
        <end position="62"/>
    </location>
</feature>
<feature type="strand" evidence="11">
    <location>
        <begin position="68"/>
        <end position="73"/>
    </location>
</feature>
<feature type="strand" evidence="11">
    <location>
        <begin position="80"/>
        <end position="82"/>
    </location>
</feature>
<feature type="strand" evidence="11">
    <location>
        <begin position="87"/>
        <end position="91"/>
    </location>
</feature>
<feature type="strand" evidence="11">
    <location>
        <begin position="94"/>
        <end position="101"/>
    </location>
</feature>
<feature type="strand" evidence="11">
    <location>
        <begin position="105"/>
        <end position="112"/>
    </location>
</feature>
<feature type="strand" evidence="11">
    <location>
        <begin position="120"/>
        <end position="124"/>
    </location>
</feature>
<feature type="strand" evidence="11">
    <location>
        <begin position="128"/>
        <end position="140"/>
    </location>
</feature>
<feature type="turn" evidence="11">
    <location>
        <begin position="141"/>
        <end position="144"/>
    </location>
</feature>
<feature type="strand" evidence="11">
    <location>
        <begin position="145"/>
        <end position="153"/>
    </location>
</feature>
<feature type="turn" evidence="11">
    <location>
        <begin position="155"/>
        <end position="157"/>
    </location>
</feature>
<feature type="helix" evidence="11">
    <location>
        <begin position="160"/>
        <end position="163"/>
    </location>
</feature>
<feature type="helix" evidence="11">
    <location>
        <begin position="172"/>
        <end position="183"/>
    </location>
</feature>
<feature type="strand" evidence="11">
    <location>
        <begin position="189"/>
        <end position="192"/>
    </location>
</feature>
<feature type="turn" evidence="11">
    <location>
        <begin position="193"/>
        <end position="196"/>
    </location>
</feature>
<feature type="strand" evidence="11">
    <location>
        <begin position="197"/>
        <end position="199"/>
    </location>
</feature>
<feature type="strand" evidence="11">
    <location>
        <begin position="206"/>
        <end position="208"/>
    </location>
</feature>
<feature type="strand" evidence="11">
    <location>
        <begin position="210"/>
        <end position="215"/>
    </location>
</feature>
<feature type="strand" evidence="11">
    <location>
        <begin position="222"/>
        <end position="226"/>
    </location>
</feature>
<feature type="strand" evidence="11">
    <location>
        <begin position="232"/>
        <end position="234"/>
    </location>
</feature>
<feature type="strand" evidence="11">
    <location>
        <begin position="240"/>
        <end position="243"/>
    </location>
</feature>
<feature type="strand" evidence="11">
    <location>
        <begin position="269"/>
        <end position="272"/>
    </location>
</feature>
<feature type="strand" evidence="11">
    <location>
        <begin position="274"/>
        <end position="276"/>
    </location>
</feature>
<feature type="strand" evidence="11">
    <location>
        <begin position="280"/>
        <end position="283"/>
    </location>
</feature>
<feature type="strand" evidence="11">
    <location>
        <begin position="288"/>
        <end position="297"/>
    </location>
</feature>
<feature type="helix" evidence="11">
    <location>
        <begin position="310"/>
        <end position="313"/>
    </location>
</feature>
<feature type="strand" evidence="11">
    <location>
        <begin position="316"/>
        <end position="321"/>
    </location>
</feature>
<feature type="strand" evidence="11">
    <location>
        <begin position="326"/>
        <end position="330"/>
    </location>
</feature>
<feature type="strand" evidence="11">
    <location>
        <begin position="333"/>
        <end position="337"/>
    </location>
</feature>
<feature type="turn" evidence="11">
    <location>
        <begin position="347"/>
        <end position="350"/>
    </location>
</feature>
<feature type="strand" evidence="11">
    <location>
        <begin position="358"/>
        <end position="360"/>
    </location>
</feature>
<feature type="helix" evidence="11">
    <location>
        <begin position="367"/>
        <end position="372"/>
    </location>
</feature>
<feature type="strand" evidence="11">
    <location>
        <begin position="379"/>
        <end position="383"/>
    </location>
</feature>
<feature type="strand" evidence="11">
    <location>
        <begin position="385"/>
        <end position="391"/>
    </location>
</feature>
<feature type="helix" evidence="11">
    <location>
        <begin position="393"/>
        <end position="395"/>
    </location>
</feature>
<feature type="strand" evidence="11">
    <location>
        <begin position="397"/>
        <end position="402"/>
    </location>
</feature>
<feature type="helix" evidence="11">
    <location>
        <begin position="403"/>
        <end position="409"/>
    </location>
</feature>
<feature type="strand" evidence="11">
    <location>
        <begin position="414"/>
        <end position="416"/>
    </location>
</feature>
<feature type="strand" evidence="11">
    <location>
        <begin position="418"/>
        <end position="425"/>
    </location>
</feature>
<feature type="strand" evidence="11">
    <location>
        <begin position="431"/>
        <end position="438"/>
    </location>
</feature>
<feature type="strand" evidence="11">
    <location>
        <begin position="444"/>
        <end position="455"/>
    </location>
</feature>
<feature type="turn" evidence="11">
    <location>
        <begin position="456"/>
        <end position="459"/>
    </location>
</feature>
<feature type="strand" evidence="11">
    <location>
        <begin position="460"/>
        <end position="463"/>
    </location>
</feature>
<feature type="strand" evidence="11">
    <location>
        <begin position="469"/>
        <end position="471"/>
    </location>
</feature>
<feature type="strand" evidence="11">
    <location>
        <begin position="477"/>
        <end position="480"/>
    </location>
</feature>
<feature type="strand" evidence="11">
    <location>
        <begin position="482"/>
        <end position="485"/>
    </location>
</feature>
<feature type="strand" evidence="11">
    <location>
        <begin position="488"/>
        <end position="491"/>
    </location>
</feature>
<feature type="strand" evidence="11">
    <location>
        <begin position="496"/>
        <end position="500"/>
    </location>
</feature>
<feature type="turn" evidence="11">
    <location>
        <begin position="501"/>
        <end position="504"/>
    </location>
</feature>
<feature type="strand" evidence="11">
    <location>
        <begin position="505"/>
        <end position="508"/>
    </location>
</feature>
<feature type="helix" evidence="11">
    <location>
        <begin position="518"/>
        <end position="521"/>
    </location>
</feature>
<feature type="strand" evidence="11">
    <location>
        <begin position="527"/>
        <end position="532"/>
    </location>
</feature>
<feature type="strand" evidence="11">
    <location>
        <begin position="534"/>
        <end position="542"/>
    </location>
</feature>
<feature type="strand" evidence="11">
    <location>
        <begin position="547"/>
        <end position="551"/>
    </location>
</feature>
<feature type="strand" evidence="11">
    <location>
        <begin position="569"/>
        <end position="574"/>
    </location>
</feature>
<feature type="strand" evidence="11">
    <location>
        <begin position="576"/>
        <end position="578"/>
    </location>
</feature>
<feature type="strand" evidence="11">
    <location>
        <begin position="580"/>
        <end position="585"/>
    </location>
</feature>
<feature type="strand" evidence="11">
    <location>
        <begin position="591"/>
        <end position="599"/>
    </location>
</feature>
<feature type="helix" evidence="11">
    <location>
        <begin position="602"/>
        <end position="613"/>
    </location>
</feature>
<feature type="strand" evidence="11">
    <location>
        <begin position="620"/>
        <end position="624"/>
    </location>
</feature>
<feature type="strand" evidence="11">
    <location>
        <begin position="629"/>
        <end position="633"/>
    </location>
</feature>
<feature type="strand" evidence="11">
    <location>
        <begin position="639"/>
        <end position="648"/>
    </location>
</feature>
<feature type="strand" evidence="11">
    <location>
        <begin position="655"/>
        <end position="661"/>
    </location>
</feature>
<feature type="strand" evidence="11">
    <location>
        <begin position="666"/>
        <end position="676"/>
    </location>
</feature>
<feature type="strand" evidence="11">
    <location>
        <begin position="679"/>
        <end position="689"/>
    </location>
</feature>
<feature type="helix" evidence="11">
    <location>
        <begin position="700"/>
        <end position="706"/>
    </location>
</feature>
<feature type="strand" evidence="11">
    <location>
        <begin position="709"/>
        <end position="719"/>
    </location>
</feature>
<feature type="strand" evidence="11">
    <location>
        <begin position="730"/>
        <end position="736"/>
    </location>
</feature>
<feature type="strand" evidence="11">
    <location>
        <begin position="742"/>
        <end position="745"/>
    </location>
</feature>
<feature type="strand" evidence="11">
    <location>
        <begin position="750"/>
        <end position="753"/>
    </location>
</feature>
<feature type="strand" evidence="11">
    <location>
        <begin position="758"/>
        <end position="762"/>
    </location>
</feature>
<feature type="strand" evidence="11">
    <location>
        <begin position="764"/>
        <end position="766"/>
    </location>
</feature>
<feature type="strand" evidence="11">
    <location>
        <begin position="775"/>
        <end position="779"/>
    </location>
</feature>
<feature type="helix" evidence="11">
    <location>
        <begin position="781"/>
        <end position="784"/>
    </location>
</feature>
<feature type="strand" evidence="11">
    <location>
        <begin position="800"/>
        <end position="803"/>
    </location>
</feature>
<feature type="strand" evidence="11">
    <location>
        <begin position="805"/>
        <end position="811"/>
    </location>
</feature>
<feature type="strand" evidence="11">
    <location>
        <begin position="816"/>
        <end position="822"/>
    </location>
</feature>
<feature type="strand" evidence="11">
    <location>
        <begin position="828"/>
        <end position="832"/>
    </location>
</feature>
<feature type="helix" evidence="11">
    <location>
        <begin position="833"/>
        <end position="836"/>
    </location>
</feature>
<feature type="helix" evidence="11">
    <location>
        <begin position="845"/>
        <end position="851"/>
    </location>
</feature>
<feature type="helix" evidence="11">
    <location>
        <begin position="857"/>
        <end position="860"/>
    </location>
</feature>
<feature type="turn" evidence="11">
    <location>
        <begin position="863"/>
        <end position="865"/>
    </location>
</feature>
<feature type="helix" evidence="11">
    <location>
        <begin position="869"/>
        <end position="871"/>
    </location>
</feature>
<feature type="strand" evidence="11">
    <location>
        <begin position="872"/>
        <end position="875"/>
    </location>
</feature>
<feature type="strand" evidence="11">
    <location>
        <begin position="899"/>
        <end position="901"/>
    </location>
</feature>
<feature type="strand" evidence="11">
    <location>
        <begin position="904"/>
        <end position="911"/>
    </location>
</feature>
<feature type="strand" evidence="11">
    <location>
        <begin position="922"/>
        <end position="928"/>
    </location>
</feature>
<feature type="helix" evidence="11">
    <location>
        <begin position="938"/>
        <end position="966"/>
    </location>
</feature>
<feature type="turn" evidence="11">
    <location>
        <begin position="967"/>
        <end position="969"/>
    </location>
</feature>
<sequence length="985" mass="113803">MPSAGQRKPGSLLALQALQKWLLRGGVGAMLARQVVAALLLWLSCCVSALWRYYINSQDYSIFSTRSSIKLEYEGNSFVSWKIPESCKVENTTSPKTTLHCKRAGIHTIKPIAGNQEVERHLTVDNSYICYLWYFTVVDVYYNLSQIVTIWVYDPESASTEELIWTAKKPSLSSRVLTKQMNTLGQRPFIFTVEKRLTYHPGPLTSEGTWVIHLPMSSDDIAKVIRGNKVAFQDCFIANLYFMLTYPMTIISEPPGYEPLTVPPGSPLMLSWDTCISTFALLATDQETFQTNDSFQTWTRVRAPPGILSDAQRHSLRDVIIFDQGTLFLVDGTVYLRTEDEFTKLDESRGISETGILGFSKRRWCQIRYLYKLASKKSILIAWSKTTVYAGYATFRFVTLTDTAKLKDFLKLPQTDTLEVMSVEYLWHPLEAAVLLSHCSVCTTNTRNIRIVIYSAIFQTWTLQDFELQLPKEAILEFRFLYSAMPDIIMWDQHHVYYSYKNFTVVGTISTPSGETNLSSLSQGSKIHQVLTDRIGNVVVKMENNVMFYIKADITEAVILHTWVNTTAKTVVLFDKSFEVCILYYNENLDEKYQLQTQPYPLILELQSINKDLGDWCPYLAFQHNIHSQFYHMDKGESLTIWSQIVYPENRGLYIVVEHYGSSVMTWTQNLEYEIASGFCTKTMITRFFQTTNYELVDNYYQLQKENTGLMLLQFRPSEFSRTCLTAKPVFEIDVGCDSSKYIMVRGFNKSRCQRRDFSYVIDKELLRESLSDNLKVRYDVAKYGCPLTLELGQMFQPIVELYDENGFIKIVDANFILWEIHGRNDYTFNSTMEQNGCINEAQTWDSMIEENPDIPLDDVWGPQNYRPCFSYAIGKPGDLGQPYEILNYSNKNHIKWPMTYAGMYVYRLKILDPNYSFCNLTTIFAIESLGMIPRSSVYLVAALIFVLMLTFISILVLSYFWYLKIYRQFIIEPLHKRPAKQKKN</sequence>
<keyword id="KW-0002">3D-structure</keyword>
<keyword id="KW-1003">Cell membrane</keyword>
<keyword id="KW-0966">Cell projection</keyword>
<keyword id="KW-0969">Cilium</keyword>
<keyword id="KW-1015">Disulfide bond</keyword>
<keyword id="KW-0282">Flagellum</keyword>
<keyword id="KW-0325">Glycoprotein</keyword>
<keyword id="KW-0472">Membrane</keyword>
<keyword id="KW-1185">Reference proteome</keyword>
<keyword id="KW-0732">Signal</keyword>
<keyword id="KW-0812">Transmembrane</keyword>
<keyword id="KW-1133">Transmembrane helix</keyword>
<proteinExistence type="evidence at protein level"/>
<protein>
    <recommendedName>
        <fullName evidence="1">Cation channel sperm-associated auxiliary subunit epsilon</fullName>
        <shortName evidence="7">CatSper-epsilon</shortName>
        <shortName evidence="7">CatSperepsilon</shortName>
    </recommendedName>
    <alternativeName>
        <fullName evidence="7">C1orf101-like protein</fullName>
    </alternativeName>
</protein>
<name>CTSRE_MOUSE</name>